<sequence length="178" mass="19787">MSRVGKKIIDIPSDVTVTFDGNHVTVKGPKGELSRTLNERMTFKQEENTIEVVRPSDSKEDRTNHGTTRALLNNMVQGVSQGYVKVLELVGVGYRAQMQGKDLILNVGYSHPVEIKAEENITFSVEKNTVVKVEGISKEQVGALASNIRSVRPPEPYKGKGIRYQGEYVRRKEGKTGK</sequence>
<proteinExistence type="evidence at protein level"/>
<accession>Q2FW21</accession>
<organism>
    <name type="scientific">Staphylococcus aureus (strain NCTC 8325 / PS 47)</name>
    <dbReference type="NCBI Taxonomy" id="93061"/>
    <lineage>
        <taxon>Bacteria</taxon>
        <taxon>Bacillati</taxon>
        <taxon>Bacillota</taxon>
        <taxon>Bacilli</taxon>
        <taxon>Bacillales</taxon>
        <taxon>Staphylococcaceae</taxon>
        <taxon>Staphylococcus</taxon>
    </lineage>
</organism>
<protein>
    <recommendedName>
        <fullName evidence="1">Large ribosomal subunit protein uL6</fullName>
    </recommendedName>
    <alternativeName>
        <fullName evidence="2">50S ribosomal protein L6</fullName>
    </alternativeName>
</protein>
<name>RL6_STAA8</name>
<gene>
    <name evidence="1" type="primary">rplF</name>
    <name type="ordered locus">SAOUHSC_02496</name>
</gene>
<feature type="chain" id="PRO_0000265303" description="Large ribosomal subunit protein uL6">
    <location>
        <begin position="1"/>
        <end position="178"/>
    </location>
</feature>
<feature type="helix" evidence="3">
    <location>
        <begin position="3"/>
        <end position="6"/>
    </location>
</feature>
<feature type="strand" evidence="3">
    <location>
        <begin position="16"/>
        <end position="19"/>
    </location>
</feature>
<feature type="strand" evidence="3">
    <location>
        <begin position="21"/>
        <end position="28"/>
    </location>
</feature>
<feature type="strand" evidence="3">
    <location>
        <begin position="33"/>
        <end position="36"/>
    </location>
</feature>
<feature type="strand" evidence="3">
    <location>
        <begin position="42"/>
        <end position="48"/>
    </location>
</feature>
<feature type="strand" evidence="3">
    <location>
        <begin position="50"/>
        <end position="53"/>
    </location>
</feature>
<feature type="helix" evidence="3">
    <location>
        <begin position="59"/>
        <end position="80"/>
    </location>
</feature>
<feature type="strand" evidence="3">
    <location>
        <begin position="83"/>
        <end position="91"/>
    </location>
</feature>
<feature type="strand" evidence="3">
    <location>
        <begin position="95"/>
        <end position="99"/>
    </location>
</feature>
<feature type="strand" evidence="3">
    <location>
        <begin position="102"/>
        <end position="111"/>
    </location>
</feature>
<feature type="strand" evidence="3">
    <location>
        <begin position="113"/>
        <end position="115"/>
    </location>
</feature>
<feature type="strand" evidence="3">
    <location>
        <begin position="121"/>
        <end position="136"/>
    </location>
</feature>
<feature type="helix" evidence="3">
    <location>
        <begin position="138"/>
        <end position="149"/>
    </location>
</feature>
<feature type="turn" evidence="3">
    <location>
        <begin position="156"/>
        <end position="158"/>
    </location>
</feature>
<feature type="strand" evidence="3">
    <location>
        <begin position="161"/>
        <end position="164"/>
    </location>
</feature>
<comment type="function">
    <text evidence="1">This protein binds to the 23S rRNA, and is important in its secondary structure. It is located near the subunit interface in the base of the L7/L12 stalk, and near the tRNA binding site of the peptidyltransferase center.</text>
</comment>
<comment type="subunit">
    <text evidence="1">Part of the 50S ribosomal subunit.</text>
</comment>
<comment type="similarity">
    <text evidence="1">Belongs to the universal ribosomal protein uL6 family.</text>
</comment>
<evidence type="ECO:0000255" key="1">
    <source>
        <dbReference type="HAMAP-Rule" id="MF_01365"/>
    </source>
</evidence>
<evidence type="ECO:0000305" key="2"/>
<evidence type="ECO:0007829" key="3">
    <source>
        <dbReference type="PDB" id="7ASM"/>
    </source>
</evidence>
<dbReference type="EMBL" id="CP000253">
    <property type="protein sequence ID" value="ABD31515.1"/>
    <property type="molecule type" value="Genomic_DNA"/>
</dbReference>
<dbReference type="RefSeq" id="WP_000091975.1">
    <property type="nucleotide sequence ID" value="NZ_LS483365.1"/>
</dbReference>
<dbReference type="RefSeq" id="YP_500964.1">
    <property type="nucleotide sequence ID" value="NC_007795.1"/>
</dbReference>
<dbReference type="PDB" id="4WCE">
    <property type="method" value="X-ray"/>
    <property type="resolution" value="3.53 A"/>
    <property type="chains" value="E=1-178"/>
</dbReference>
<dbReference type="PDB" id="4WF9">
    <property type="method" value="X-ray"/>
    <property type="resolution" value="3.43 A"/>
    <property type="chains" value="E=1-178"/>
</dbReference>
<dbReference type="PDB" id="4WFA">
    <property type="method" value="X-ray"/>
    <property type="resolution" value="3.39 A"/>
    <property type="chains" value="E=1-178"/>
</dbReference>
<dbReference type="PDB" id="4WFB">
    <property type="method" value="X-ray"/>
    <property type="resolution" value="3.43 A"/>
    <property type="chains" value="E=1-178"/>
</dbReference>
<dbReference type="PDB" id="5HKV">
    <property type="method" value="X-ray"/>
    <property type="resolution" value="3.66 A"/>
    <property type="chains" value="E=1-178"/>
</dbReference>
<dbReference type="PDB" id="5HL7">
    <property type="method" value="X-ray"/>
    <property type="resolution" value="3.55 A"/>
    <property type="chains" value="E=1-178"/>
</dbReference>
<dbReference type="PDB" id="5LI0">
    <property type="method" value="EM"/>
    <property type="resolution" value="3.80 A"/>
    <property type="chains" value="H=8-171"/>
</dbReference>
<dbReference type="PDB" id="5ND8">
    <property type="method" value="EM"/>
    <property type="resolution" value="3.70 A"/>
    <property type="chains" value="H=1-178"/>
</dbReference>
<dbReference type="PDB" id="5ND9">
    <property type="method" value="EM"/>
    <property type="resolution" value="3.70 A"/>
    <property type="chains" value="H=1-178"/>
</dbReference>
<dbReference type="PDB" id="5NRG">
    <property type="method" value="X-ray"/>
    <property type="resolution" value="3.44 A"/>
    <property type="chains" value="E=1-178"/>
</dbReference>
<dbReference type="PDB" id="5TCU">
    <property type="method" value="EM"/>
    <property type="resolution" value="3.90 A"/>
    <property type="chains" value="LL=2-175"/>
</dbReference>
<dbReference type="PDB" id="6HMA">
    <property type="method" value="EM"/>
    <property type="resolution" value="2.65 A"/>
    <property type="chains" value="G=2-176"/>
</dbReference>
<dbReference type="PDB" id="6WRU">
    <property type="method" value="EM"/>
    <property type="resolution" value="3.10 A"/>
    <property type="chains" value="U=1-175"/>
</dbReference>
<dbReference type="PDB" id="6YEF">
    <property type="method" value="EM"/>
    <property type="resolution" value="3.20 A"/>
    <property type="chains" value="H=1-178"/>
</dbReference>
<dbReference type="PDB" id="7ASM">
    <property type="method" value="EM"/>
    <property type="resolution" value="2.48 A"/>
    <property type="chains" value="G=2-176"/>
</dbReference>
<dbReference type="PDB" id="7NHL">
    <property type="method" value="EM"/>
    <property type="resolution" value="3.10 A"/>
    <property type="chains" value="K=1-178"/>
</dbReference>
<dbReference type="PDB" id="7NHM">
    <property type="method" value="EM"/>
    <property type="resolution" value="3.10 A"/>
    <property type="chains" value="K=1-178"/>
</dbReference>
<dbReference type="PDB" id="8P2F">
    <property type="method" value="EM"/>
    <property type="resolution" value="2.44 A"/>
    <property type="chains" value="K=1-178"/>
</dbReference>
<dbReference type="PDB" id="8P2G">
    <property type="method" value="EM"/>
    <property type="resolution" value="2.02 A"/>
    <property type="chains" value="K=1-178"/>
</dbReference>
<dbReference type="PDB" id="8P2H">
    <property type="method" value="EM"/>
    <property type="resolution" value="2.49 A"/>
    <property type="chains" value="K=1-178"/>
</dbReference>
<dbReference type="PDBsum" id="4WCE"/>
<dbReference type="PDBsum" id="4WF9"/>
<dbReference type="PDBsum" id="4WFA"/>
<dbReference type="PDBsum" id="4WFB"/>
<dbReference type="PDBsum" id="5HKV"/>
<dbReference type="PDBsum" id="5HL7"/>
<dbReference type="PDBsum" id="5LI0"/>
<dbReference type="PDBsum" id="5ND8"/>
<dbReference type="PDBsum" id="5ND9"/>
<dbReference type="PDBsum" id="5NRG"/>
<dbReference type="PDBsum" id="5TCU"/>
<dbReference type="PDBsum" id="6HMA"/>
<dbReference type="PDBsum" id="6WRU"/>
<dbReference type="PDBsum" id="6YEF"/>
<dbReference type="PDBsum" id="7ASM"/>
<dbReference type="PDBsum" id="7NHL"/>
<dbReference type="PDBsum" id="7NHM"/>
<dbReference type="PDBsum" id="8P2F"/>
<dbReference type="PDBsum" id="8P2G"/>
<dbReference type="PDBsum" id="8P2H"/>
<dbReference type="EMDB" id="EMD-10791"/>
<dbReference type="EMDB" id="EMD-12332"/>
<dbReference type="EMDB" id="EMD-12333"/>
<dbReference type="EMDB" id="EMD-17363"/>
<dbReference type="EMDB" id="EMD-17364"/>
<dbReference type="EMDB" id="EMD-17365"/>
<dbReference type="EMDB" id="EMD-3624"/>
<dbReference type="EMDB" id="EMD-3625"/>
<dbReference type="EMDB" id="EMD-4050"/>
<dbReference type="EMDB" id="EMD-8402"/>
<dbReference type="SMR" id="Q2FW21"/>
<dbReference type="IntAct" id="Q2FW21">
    <property type="interactions" value="1"/>
</dbReference>
<dbReference type="STRING" id="93061.SAOUHSC_02496"/>
<dbReference type="PaxDb" id="1280-SAXN108_2485"/>
<dbReference type="GeneID" id="3920873"/>
<dbReference type="KEGG" id="sao:SAOUHSC_02496"/>
<dbReference type="PATRIC" id="fig|93061.5.peg.2252"/>
<dbReference type="eggNOG" id="COG0097">
    <property type="taxonomic scope" value="Bacteria"/>
</dbReference>
<dbReference type="HOGENOM" id="CLU_065464_1_2_9"/>
<dbReference type="OrthoDB" id="9805007at2"/>
<dbReference type="EvolutionaryTrace" id="Q2FW21"/>
<dbReference type="PRO" id="PR:Q2FW21"/>
<dbReference type="Proteomes" id="UP000008816">
    <property type="component" value="Chromosome"/>
</dbReference>
<dbReference type="GO" id="GO:0022625">
    <property type="term" value="C:cytosolic large ribosomal subunit"/>
    <property type="evidence" value="ECO:0000318"/>
    <property type="project" value="GO_Central"/>
</dbReference>
<dbReference type="GO" id="GO:0019843">
    <property type="term" value="F:rRNA binding"/>
    <property type="evidence" value="ECO:0007669"/>
    <property type="project" value="UniProtKB-UniRule"/>
</dbReference>
<dbReference type="GO" id="GO:0003735">
    <property type="term" value="F:structural constituent of ribosome"/>
    <property type="evidence" value="ECO:0000318"/>
    <property type="project" value="GO_Central"/>
</dbReference>
<dbReference type="GO" id="GO:0002181">
    <property type="term" value="P:cytoplasmic translation"/>
    <property type="evidence" value="ECO:0000318"/>
    <property type="project" value="GO_Central"/>
</dbReference>
<dbReference type="FunFam" id="3.90.930.12:FF:000001">
    <property type="entry name" value="50S ribosomal protein L6"/>
    <property type="match status" value="1"/>
</dbReference>
<dbReference type="FunFam" id="3.90.930.12:FF:000002">
    <property type="entry name" value="50S ribosomal protein L6"/>
    <property type="match status" value="1"/>
</dbReference>
<dbReference type="Gene3D" id="3.90.930.12">
    <property type="entry name" value="Ribosomal protein L6, alpha-beta domain"/>
    <property type="match status" value="2"/>
</dbReference>
<dbReference type="HAMAP" id="MF_01365_B">
    <property type="entry name" value="Ribosomal_uL6_B"/>
    <property type="match status" value="1"/>
</dbReference>
<dbReference type="InterPro" id="IPR000702">
    <property type="entry name" value="Ribosomal_uL6-like"/>
</dbReference>
<dbReference type="InterPro" id="IPR036789">
    <property type="entry name" value="Ribosomal_uL6-like_a/b-dom_sf"/>
</dbReference>
<dbReference type="InterPro" id="IPR020040">
    <property type="entry name" value="Ribosomal_uL6_a/b-dom"/>
</dbReference>
<dbReference type="InterPro" id="IPR019906">
    <property type="entry name" value="Ribosomal_uL6_bac-type"/>
</dbReference>
<dbReference type="InterPro" id="IPR002358">
    <property type="entry name" value="Ribosomal_uL6_CS"/>
</dbReference>
<dbReference type="NCBIfam" id="TIGR03654">
    <property type="entry name" value="L6_bact"/>
    <property type="match status" value="1"/>
</dbReference>
<dbReference type="PANTHER" id="PTHR11655">
    <property type="entry name" value="60S/50S RIBOSOMAL PROTEIN L6/L9"/>
    <property type="match status" value="1"/>
</dbReference>
<dbReference type="PANTHER" id="PTHR11655:SF14">
    <property type="entry name" value="LARGE RIBOSOMAL SUBUNIT PROTEIN UL6M"/>
    <property type="match status" value="1"/>
</dbReference>
<dbReference type="Pfam" id="PF00347">
    <property type="entry name" value="Ribosomal_L6"/>
    <property type="match status" value="2"/>
</dbReference>
<dbReference type="PIRSF" id="PIRSF002162">
    <property type="entry name" value="Ribosomal_L6"/>
    <property type="match status" value="1"/>
</dbReference>
<dbReference type="PRINTS" id="PR00059">
    <property type="entry name" value="RIBOSOMALL6"/>
</dbReference>
<dbReference type="SUPFAM" id="SSF56053">
    <property type="entry name" value="Ribosomal protein L6"/>
    <property type="match status" value="2"/>
</dbReference>
<dbReference type="PROSITE" id="PS00525">
    <property type="entry name" value="RIBOSOMAL_L6_1"/>
    <property type="match status" value="1"/>
</dbReference>
<reference key="1">
    <citation type="book" date="2006" name="Gram positive pathogens, 2nd edition">
        <title>The Staphylococcus aureus NCTC 8325 genome.</title>
        <editorList>
            <person name="Fischetti V."/>
            <person name="Novick R."/>
            <person name="Ferretti J."/>
            <person name="Portnoy D."/>
            <person name="Rood J."/>
        </editorList>
        <authorList>
            <person name="Gillaspy A.F."/>
            <person name="Worrell V."/>
            <person name="Orvis J."/>
            <person name="Roe B.A."/>
            <person name="Dyer D.W."/>
            <person name="Iandolo J.J."/>
        </authorList>
    </citation>
    <scope>NUCLEOTIDE SEQUENCE [LARGE SCALE GENOMIC DNA]</scope>
    <source>
        <strain>NCTC 8325 / PS 47</strain>
    </source>
</reference>
<keyword id="KW-0002">3D-structure</keyword>
<keyword id="KW-1185">Reference proteome</keyword>
<keyword id="KW-0687">Ribonucleoprotein</keyword>
<keyword id="KW-0689">Ribosomal protein</keyword>
<keyword id="KW-0694">RNA-binding</keyword>
<keyword id="KW-0699">rRNA-binding</keyword>